<accession>P47820</accession>
<accession>Q7TMC6</accession>
<accession>Q8CFN1</accession>
<accession>Q9EQM9</accession>
<evidence type="ECO:0000250" key="1">
    <source>
        <dbReference type="UniProtKB" id="P09470"/>
    </source>
</evidence>
<evidence type="ECO:0000250" key="2">
    <source>
        <dbReference type="UniProtKB" id="P12821"/>
    </source>
</evidence>
<evidence type="ECO:0000250" key="3">
    <source>
        <dbReference type="UniProtKB" id="P12822"/>
    </source>
</evidence>
<evidence type="ECO:0000255" key="4"/>
<evidence type="ECO:0000255" key="5">
    <source>
        <dbReference type="PROSITE-ProRule" id="PRU01355"/>
    </source>
</evidence>
<evidence type="ECO:0000269" key="6">
    <source>
    </source>
</evidence>
<evidence type="ECO:0000269" key="7">
    <source>
    </source>
</evidence>
<evidence type="ECO:0000269" key="8">
    <source>
    </source>
</evidence>
<evidence type="ECO:0000269" key="9">
    <source>
    </source>
</evidence>
<evidence type="ECO:0000269" key="10">
    <source>
    </source>
</evidence>
<evidence type="ECO:0000269" key="11">
    <source>
    </source>
</evidence>
<evidence type="ECO:0000269" key="12">
    <source ref="5"/>
</evidence>
<evidence type="ECO:0000303" key="13">
    <source>
    </source>
</evidence>
<evidence type="ECO:0000303" key="14">
    <source>
    </source>
</evidence>
<evidence type="ECO:0000305" key="15"/>
<evidence type="ECO:0007744" key="16">
    <source>
    </source>
</evidence>
<proteinExistence type="evidence at protein level"/>
<keyword id="KW-0877">Alternative promoter usage</keyword>
<keyword id="KW-0112">Calmodulin-binding</keyword>
<keyword id="KW-0121">Carboxypeptidase</keyword>
<keyword id="KW-1003">Cell membrane</keyword>
<keyword id="KW-0963">Cytoplasm</keyword>
<keyword id="KW-1015">Disulfide bond</keyword>
<keyword id="KW-0325">Glycoprotein</keyword>
<keyword id="KW-0378">Hydrolase</keyword>
<keyword id="KW-0472">Membrane</keyword>
<keyword id="KW-0479">Metal-binding</keyword>
<keyword id="KW-0482">Metalloprotease</keyword>
<keyword id="KW-0597">Phosphoprotein</keyword>
<keyword id="KW-0645">Protease</keyword>
<keyword id="KW-1185">Reference proteome</keyword>
<keyword id="KW-0677">Repeat</keyword>
<keyword id="KW-0964">Secreted</keyword>
<keyword id="KW-0732">Signal</keyword>
<keyword id="KW-0812">Transmembrane</keyword>
<keyword id="KW-1133">Transmembrane helix</keyword>
<keyword id="KW-0862">Zinc</keyword>
<comment type="function">
    <text evidence="1 2 6 9 10">Dipeptidyl carboxypeptidase that removes dipeptides from the C-terminus of a variety of circulating hormones, such as angiotensin I, bradykinin or enkephalins, thereby playing a key role in the regulation of blood pressure, electrolyte homeostasis or synaptic plasticity (By similarity). Composed of two similar catalytic domains, each possessing a functional active site, with different selectivity for substrates (By similarity). Plays a major role in the angiotensin-renin system that regulates blood pressure and sodium retention by the kidney by converting angiotensin I to angiotensin II, resulting in an increase of the vasoconstrictor activity of angiotensin (By similarity). Also able to inactivate bradykinin, a potent vasodilator, and therefore enhance the blood pressure response (By similarity). Acts as a regulator of synaptic transmission by mediating cleavage of neuropeptide hormones, such as substance P, neurotensin or enkephalins (By similarity). Catalyzes degradation of different enkephalin neuropeptides (Met-enkephalin, Leu-enkephalin, Met-enkephalin-Arg-Phe and possibly Met-enkephalin-Arg-Gly-Leu) (PubMed:20487892). Acts as a regulator of synaptic plasticity in the nucleus accumbens of the brain by mediating cleavage of Met-enkephalin-Arg-Phe, a strong ligand of Mu-type opioid receptor OPRM1, into Met-enkephalin (By similarity). Met-enkephalin-Arg-Phe cleavage by ACE decreases activation of OPRM1, leading to long-term synaptic potentiation of glutamate release (By similarity). Also acts as a regulator of hematopoietic stem cell differentiation by mediating degradation of hemoregulatory peptide N-acetyl-SDKP (AcSDKP) (PubMed:12500972, PubMed:18077343). Acts as a regulator of cannabinoid signaling pathway by mediating degradation of hemopressin, an antagonist peptide of the cannabinoid receptor CNR1 (PubMed:12500972, PubMed:18077343). Involved in amyloid-beta metabolism by catalyzing degradation of Amyloid-beta protein 40 and Amyloid-beta protein 42 peptides, thereby preventing plaque formation (By similarity). Catalyzes cleavage of cholecystokinin (maturation of Cholecystokinin-8 and Cholecystokinin-5) and Gonadoliberin-1 (both maturation and degradation) hormones (By similarity). Degradation of hemoregulatory peptide N-acetyl-SDKP (AcSDKP) and amyloid-beta proteins is mediated by the N-terminal catalytic domain, while angiotensin I and cholecystokinin cleavage is mediated by the C-terminal catalytic region (By similarity).</text>
</comment>
<comment type="function">
    <molecule>Angiotensin-converting enzyme, soluble form</molecule>
    <text evidence="2">Soluble form that is released in blood plasma and other body fluids following proteolytic cleavage in the juxtamembrane stalk region.</text>
</comment>
<comment type="function">
    <molecule>Isoform Testis-specific</molecule>
    <text evidence="1 2">Isoform produced by alternative promoter usage that is specifically expressed in spermatocytes and adult testis, and which is required for male fertility. In contrast to somatic isoforms, only contains one catalytic domain. Acts as a dipeptidyl carboxypeptidase that removes dipeptides from the C-terminus of substrates (By similarity). The identity of substrates that are needed for male fertility is unknown. May also have a glycosidase activity which releases GPI-anchored proteins from the membrane by cleaving the mannose linkage in the GPI moiety. The GPIase activity was reported to be essential for the egg-binding ability of the sperm. This activity is however unclear and has been challenged by other groups, suggesting that it may be indirect (By similarity).</text>
</comment>
<comment type="catalytic activity">
    <reaction evidence="2">
        <text>Release of a C-terminal dipeptide, oligopeptide-|-Xaa-Yaa, when Xaa is not Pro, and Yaa is neither Asp nor Glu. Thus, conversion of angiotensin I to angiotensin II, with increase in vasoconstrictor activity, but no action on angiotensin II.</text>
        <dbReference type="EC" id="3.4.15.1"/>
    </reaction>
</comment>
<comment type="catalytic activity">
    <reaction evidence="2">
        <text>angiotensin I + H2O = L-histidyl-L-leucine + angiotensin II</text>
        <dbReference type="Rhea" id="RHEA:63560"/>
        <dbReference type="ChEBI" id="CHEBI:15377"/>
        <dbReference type="ChEBI" id="CHEBI:58506"/>
        <dbReference type="ChEBI" id="CHEBI:147350"/>
        <dbReference type="ChEBI" id="CHEBI:147392"/>
        <dbReference type="EC" id="3.4.15.1"/>
    </reaction>
    <physiologicalReaction direction="left-to-right" evidence="2">
        <dbReference type="Rhea" id="RHEA:63561"/>
    </physiologicalReaction>
</comment>
<comment type="catalytic activity">
    <reaction evidence="2">
        <text>bradykinin + H2O = L-Phe-L-Arg + bradykinin(1-7)</text>
        <dbReference type="Rhea" id="RHEA:71451"/>
        <dbReference type="ChEBI" id="CHEBI:15377"/>
        <dbReference type="ChEBI" id="CHEBI:132988"/>
        <dbReference type="ChEBI" id="CHEBI:133147"/>
        <dbReference type="ChEBI" id="CHEBI:147352"/>
    </reaction>
    <physiologicalReaction direction="left-to-right" evidence="2">
        <dbReference type="Rhea" id="RHEA:71452"/>
    </physiologicalReaction>
</comment>
<comment type="catalytic activity">
    <reaction evidence="2">
        <text>substance P + H2O = substance P(1-9) + L-Leu-L-Met-NH2</text>
        <dbReference type="Rhea" id="RHEA:71459"/>
        <dbReference type="ChEBI" id="CHEBI:15377"/>
        <dbReference type="ChEBI" id="CHEBI:190692"/>
        <dbReference type="ChEBI" id="CHEBI:190693"/>
        <dbReference type="ChEBI" id="CHEBI:190700"/>
    </reaction>
    <physiologicalReaction direction="left-to-right" evidence="2">
        <dbReference type="Rhea" id="RHEA:71460"/>
    </physiologicalReaction>
</comment>
<comment type="catalytic activity">
    <reaction evidence="2">
        <text>substance P + H2O = substance P(1-8) + Gly-L-Leu-L-Met-NH2</text>
        <dbReference type="Rhea" id="RHEA:71463"/>
        <dbReference type="ChEBI" id="CHEBI:15377"/>
        <dbReference type="ChEBI" id="CHEBI:190692"/>
        <dbReference type="ChEBI" id="CHEBI:190694"/>
        <dbReference type="ChEBI" id="CHEBI:190699"/>
    </reaction>
    <physiologicalReaction direction="left-to-right" evidence="2">
        <dbReference type="Rhea" id="RHEA:71464"/>
    </physiologicalReaction>
</comment>
<comment type="catalytic activity">
    <reaction evidence="2">
        <text>substance P + H2O = L-Phe-L-Phe-Gly-L-Leu-L-Met-NH2 + substance P(1-6)</text>
        <dbReference type="Rhea" id="RHEA:71471"/>
        <dbReference type="ChEBI" id="CHEBI:15377"/>
        <dbReference type="ChEBI" id="CHEBI:190692"/>
        <dbReference type="ChEBI" id="CHEBI:190696"/>
        <dbReference type="ChEBI" id="CHEBI:190697"/>
    </reaction>
    <physiologicalReaction direction="left-to-right" evidence="2">
        <dbReference type="Rhea" id="RHEA:71472"/>
    </physiologicalReaction>
</comment>
<comment type="catalytic activity">
    <reaction evidence="2">
        <text>neurotensin + H2O = neurotensin(1-11) + L-isoleucyl-L-leucine</text>
        <dbReference type="Rhea" id="RHEA:71475"/>
        <dbReference type="ChEBI" id="CHEBI:15377"/>
        <dbReference type="ChEBI" id="CHEBI:147362"/>
        <dbReference type="ChEBI" id="CHEBI:190704"/>
        <dbReference type="ChEBI" id="CHEBI:190706"/>
    </reaction>
    <physiologicalReaction direction="left-to-right" evidence="2">
        <dbReference type="Rhea" id="RHEA:71476"/>
    </physiologicalReaction>
</comment>
<comment type="catalytic activity">
    <reaction evidence="2">
        <text>goralatide + H2O = N-acetyl-L-seryl-L-aspartate + L-lysyl-L-proline</text>
        <dbReference type="Rhea" id="RHEA:71455"/>
        <dbReference type="ChEBI" id="CHEBI:15377"/>
        <dbReference type="ChEBI" id="CHEBI:190701"/>
        <dbReference type="ChEBI" id="CHEBI:190702"/>
        <dbReference type="ChEBI" id="CHEBI:190703"/>
    </reaction>
    <physiologicalReaction direction="left-to-right" evidence="2">
        <dbReference type="Rhea" id="RHEA:71456"/>
    </physiologicalReaction>
</comment>
<comment type="catalytic activity">
    <reaction evidence="2">
        <text>Met-enkephalin + H2O = L-phenylalanyl-L-methionine + L-tyrosylglycylglycine</text>
        <dbReference type="Rhea" id="RHEA:71483"/>
        <dbReference type="ChEBI" id="CHEBI:15377"/>
        <dbReference type="ChEBI" id="CHEBI:189868"/>
        <dbReference type="ChEBI" id="CHEBI:190708"/>
        <dbReference type="ChEBI" id="CHEBI:190709"/>
    </reaction>
    <physiologicalReaction direction="left-to-right" evidence="2">
        <dbReference type="Rhea" id="RHEA:71484"/>
    </physiologicalReaction>
</comment>
<comment type="catalytic activity">
    <reaction evidence="2">
        <text>Leu-enkephalin + H2O = L-tyrosylglycylglycine + L-phenylalanyl-L-leucine</text>
        <dbReference type="Rhea" id="RHEA:71487"/>
        <dbReference type="ChEBI" id="CHEBI:15377"/>
        <dbReference type="ChEBI" id="CHEBI:190689"/>
        <dbReference type="ChEBI" id="CHEBI:190708"/>
        <dbReference type="ChEBI" id="CHEBI:190710"/>
    </reaction>
    <physiologicalReaction direction="left-to-right" evidence="2">
        <dbReference type="Rhea" id="RHEA:71488"/>
    </physiologicalReaction>
</comment>
<comment type="catalytic activity">
    <reaction evidence="10">
        <text>Met-enkephalin-Arg-Phe + H2O = L-arginyl-L-phenylalanine + Met-enkephalin</text>
        <dbReference type="Rhea" id="RHEA:70675"/>
        <dbReference type="ChEBI" id="CHEBI:15377"/>
        <dbReference type="ChEBI" id="CHEBI:189868"/>
        <dbReference type="ChEBI" id="CHEBI:189869"/>
        <dbReference type="ChEBI" id="CHEBI:189870"/>
    </reaction>
    <physiologicalReaction direction="left-to-right" evidence="10">
        <dbReference type="Rhea" id="RHEA:70676"/>
    </physiologicalReaction>
</comment>
<comment type="catalytic activity">
    <molecule>Isoform Testis-specific</molecule>
    <reaction evidence="2">
        <text>Release of a C-terminal dipeptide, oligopeptide-|-Xaa-Yaa, when Xaa is not Pro, and Yaa is neither Asp nor Glu. Thus, conversion of angiotensin I to angiotensin II, with increase in vasoconstrictor activity, but no action on angiotensin II.</text>
        <dbReference type="EC" id="3.4.15.1"/>
    </reaction>
</comment>
<comment type="cofactor">
    <cofactor evidence="2">
        <name>Zn(2+)</name>
        <dbReference type="ChEBI" id="CHEBI:29105"/>
    </cofactor>
    <text evidence="2">Binds 2 Zn(2+) ions per subunit.</text>
</comment>
<comment type="cofactor">
    <molecule>Isoform Testis-specific</molecule>
    <cofactor evidence="2">
        <name>Zn(2+)</name>
        <dbReference type="ChEBI" id="CHEBI:29105"/>
    </cofactor>
    <text evidence="2">Isoform Testis-specific only binds 1 Zn(2+) ion per subunit.</text>
</comment>
<comment type="cofactor">
    <cofactor evidence="2">
        <name>chloride</name>
        <dbReference type="ChEBI" id="CHEBI:17996"/>
    </cofactor>
    <text evidence="2">Binds 3 chloride ions per subunit.</text>
</comment>
<comment type="cofactor">
    <molecule>Isoform Testis-specific</molecule>
    <cofactor evidence="2">
        <name>chloride</name>
        <dbReference type="ChEBI" id="CHEBI:17996"/>
    </cofactor>
</comment>
<comment type="activity regulation">
    <text evidence="2">The dipeptidyl carboxypeptidase activity is strongly activated by chloride. The dipeptidyl carboxypeptidase activity is specifically inhibited by lisinopril, captopril and enalaprilat.</text>
</comment>
<comment type="activity regulation">
    <molecule>Isoform Testis-specific</molecule>
    <text evidence="2">Strongly inhibited by lisinopril and captopril.</text>
</comment>
<comment type="subunit">
    <text evidence="2 3">Monomer and homodimer; homodimerizes following binding to an inhibitor (By similarity). Interacts with calmodulin (CALM1, CALM2 or CALM3); interaction takes place in the cytoplasmic region and regulates phosphorylation and proteolytic cleavage (By similarity).</text>
</comment>
<comment type="subcellular location">
    <subcellularLocation>
        <location evidence="2">Cell membrane</location>
        <topology evidence="4">Single-pass type I membrane protein</topology>
    </subcellularLocation>
    <subcellularLocation>
        <location evidence="1">Cytoplasm</location>
    </subcellularLocation>
    <text evidence="1">Detected in both cell membrane and cytoplasm in neurons.</text>
</comment>
<comment type="subcellular location">
    <molecule>Angiotensin-converting enzyme, soluble form</molecule>
    <subcellularLocation>
        <location evidence="2">Secreted</location>
    </subcellularLocation>
</comment>
<comment type="subcellular location">
    <molecule>Isoform Testis-specific</molecule>
    <subcellularLocation>
        <location evidence="2">Cell membrane</location>
        <topology evidence="4">Single-pass type I membrane protein</topology>
    </subcellularLocation>
    <subcellularLocation>
        <location evidence="2">Secreted</location>
    </subcellularLocation>
    <text evidence="2">The testis-specific isoform can be cleaved before the transmembrane region, releasing a soluble form.</text>
</comment>
<comment type="alternative products">
    <event type="alternative promoter"/>
    <isoform>
        <id>P47820-1</id>
        <name>Somatic</name>
        <sequence type="displayed"/>
    </isoform>
    <isoform>
        <id>P47820-2</id>
        <id>Q8CFN1-1</id>
        <name>Testis-specific</name>
        <name>ACE-T</name>
        <sequence type="described" ref="VSP_037642 VSP_037643"/>
    </isoform>
</comment>
<comment type="tissue specificity">
    <text evidence="7">Expressed in brain, kidney, lung, skeletal muscle and heart.</text>
</comment>
<comment type="tissue specificity">
    <molecule>Isoform Testis-specific</molecule>
    <text evidence="7">Testis-specific isoform is expressed in spermatocytes, adult testis.</text>
</comment>
<comment type="induction">
    <text evidence="8">Up-regulated after myocardial infarction.</text>
</comment>
<comment type="PTM">
    <molecule>Angiotensin-converting enzyme, soluble form</molecule>
    <text evidence="2">Produced following proteolytic cleavage by secretase enzymes that cleave the transmembrane form in the juxtamembrane stalk region upstream of the transmembrane region. Cleavage can take place at different sites of the juxtamembrane stalk region.</text>
</comment>
<comment type="PTM">
    <text evidence="2 3">Phosphorylated by CK2 on Ser-1306; which allows membrane retention (By similarity). Phosphorylated on tyrosine residues on its extracellular part, promoting cleavage by secretase enzymes and formation of the soluble form (Angiotensin-converting enzyme, soluble form) (By similarity).</text>
</comment>
<comment type="similarity">
    <text evidence="15">Belongs to the peptidase M2 family.</text>
</comment>
<organism>
    <name type="scientific">Rattus norvegicus</name>
    <name type="common">Rat</name>
    <dbReference type="NCBI Taxonomy" id="10116"/>
    <lineage>
        <taxon>Eukaryota</taxon>
        <taxon>Metazoa</taxon>
        <taxon>Chordata</taxon>
        <taxon>Craniata</taxon>
        <taxon>Vertebrata</taxon>
        <taxon>Euteleostomi</taxon>
        <taxon>Mammalia</taxon>
        <taxon>Eutheria</taxon>
        <taxon>Euarchontoglires</taxon>
        <taxon>Glires</taxon>
        <taxon>Rodentia</taxon>
        <taxon>Myomorpha</taxon>
        <taxon>Muroidea</taxon>
        <taxon>Muridae</taxon>
        <taxon>Murinae</taxon>
        <taxon>Rattus</taxon>
    </lineage>
</organism>
<feature type="signal peptide" evidence="2">
    <location>
        <begin position="1"/>
        <end position="35"/>
    </location>
</feature>
<feature type="chain" id="PRO_0000028557" description="Angiotensin-converting enzyme">
    <location>
        <begin position="36"/>
        <end position="1313"/>
    </location>
</feature>
<feature type="chain" id="PRO_0000028558" description="Angiotensin-converting enzyme, soluble form">
    <location>
        <begin position="36"/>
        <end position="1238"/>
    </location>
</feature>
<feature type="topological domain" description="Extracellular" evidence="4">
    <location>
        <begin position="36"/>
        <end position="1265"/>
    </location>
</feature>
<feature type="transmembrane region" description="Helical" evidence="4">
    <location>
        <begin position="1266"/>
        <end position="1282"/>
    </location>
</feature>
<feature type="topological domain" description="Cytoplasmic" evidence="4">
    <location>
        <begin position="1283"/>
        <end position="1313"/>
    </location>
</feature>
<feature type="domain" description="Peptidase M2 1" evidence="5">
    <location>
        <begin position="46"/>
        <end position="630"/>
    </location>
</feature>
<feature type="domain" description="Peptidase M2 2" evidence="5">
    <location>
        <begin position="649"/>
        <end position="1228"/>
    </location>
</feature>
<feature type="region of interest" description="Juxtamembrane stalk" evidence="2">
    <location>
        <begin position="1221"/>
        <end position="1262"/>
    </location>
</feature>
<feature type="active site" description="Proton acceptor 1" evidence="5">
    <location>
        <position position="397"/>
    </location>
</feature>
<feature type="active site" description="Proton donor 1" evidence="5">
    <location>
        <position position="526"/>
    </location>
</feature>
<feature type="active site" description="Proton acceptor 2" evidence="5">
    <location>
        <position position="995"/>
    </location>
</feature>
<feature type="active site" description="Proton donor 2" evidence="5">
    <location>
        <position position="1124"/>
    </location>
</feature>
<feature type="binding site" evidence="5">
    <location>
        <position position="237"/>
    </location>
    <ligand>
        <name>chloride</name>
        <dbReference type="ChEBI" id="CHEBI:17996"/>
        <label>1</label>
    </ligand>
</feature>
<feature type="binding site" evidence="5">
    <location>
        <position position="396"/>
    </location>
    <ligand>
        <name>Zn(2+)</name>
        <dbReference type="ChEBI" id="CHEBI:29105"/>
        <label>1</label>
        <note>catalytic</note>
    </ligand>
</feature>
<feature type="binding site" evidence="5">
    <location>
        <position position="400"/>
    </location>
    <ligand>
        <name>Zn(2+)</name>
        <dbReference type="ChEBI" id="CHEBI:29105"/>
        <label>1</label>
        <note>catalytic</note>
    </ligand>
</feature>
<feature type="binding site" evidence="5">
    <location>
        <position position="424"/>
    </location>
    <ligand>
        <name>Zn(2+)</name>
        <dbReference type="ChEBI" id="CHEBI:29105"/>
        <label>1</label>
        <note>catalytic</note>
    </ligand>
</feature>
<feature type="binding site" evidence="5">
    <location>
        <position position="535"/>
    </location>
    <ligand>
        <name>chloride</name>
        <dbReference type="ChEBI" id="CHEBI:17996"/>
        <label>1</label>
    </ligand>
</feature>
<feature type="binding site" evidence="5">
    <location>
        <position position="797"/>
    </location>
    <ligand>
        <name>chloride</name>
        <dbReference type="ChEBI" id="CHEBI:17996"/>
        <label>2</label>
    </ligand>
</feature>
<feature type="binding site" evidence="5">
    <location>
        <position position="835"/>
    </location>
    <ligand>
        <name>chloride</name>
        <dbReference type="ChEBI" id="CHEBI:17996"/>
        <label>3</label>
    </ligand>
</feature>
<feature type="binding site" evidence="5">
    <location>
        <position position="994"/>
    </location>
    <ligand>
        <name>Zn(2+)</name>
        <dbReference type="ChEBI" id="CHEBI:29105"/>
        <label>2</label>
        <note>catalytic</note>
    </ligand>
</feature>
<feature type="binding site" evidence="5">
    <location>
        <position position="998"/>
    </location>
    <ligand>
        <name>Zn(2+)</name>
        <dbReference type="ChEBI" id="CHEBI:29105"/>
        <label>2</label>
        <note>catalytic</note>
    </ligand>
</feature>
<feature type="binding site" evidence="5">
    <location>
        <position position="1022"/>
    </location>
    <ligand>
        <name>Zn(2+)</name>
        <dbReference type="ChEBI" id="CHEBI:29105"/>
        <label>2</label>
        <note>catalytic</note>
    </ligand>
</feature>
<feature type="binding site" evidence="5">
    <location>
        <position position="1096"/>
    </location>
    <ligand>
        <name>chloride</name>
        <dbReference type="ChEBI" id="CHEBI:17996"/>
        <label>2</label>
    </ligand>
</feature>
<feature type="binding site" evidence="5">
    <location>
        <position position="1100"/>
    </location>
    <ligand>
        <name>chloride</name>
        <dbReference type="ChEBI" id="CHEBI:17996"/>
        <label>2</label>
    </ligand>
</feature>
<feature type="binding site" evidence="5">
    <location>
        <position position="1133"/>
    </location>
    <ligand>
        <name>chloride</name>
        <dbReference type="ChEBI" id="CHEBI:17996"/>
        <label>3</label>
    </ligand>
</feature>
<feature type="modified residue" description="Phosphoserine" evidence="16">
    <location>
        <position position="1306"/>
    </location>
</feature>
<feature type="glycosylation site" description="N-linked (GlcNAc...) asparagine" evidence="4">
    <location>
        <position position="44"/>
    </location>
</feature>
<feature type="glycosylation site" description="N-linked (GlcNAc...) asparagine" evidence="4">
    <location>
        <position position="60"/>
    </location>
</feature>
<feature type="glycosylation site" description="N-linked (GlcNAc...) asparagine" evidence="4">
    <location>
        <position position="80"/>
    </location>
</feature>
<feature type="glycosylation site" description="N-linked (GlcNAc...) asparagine" evidence="4">
    <location>
        <position position="117"/>
    </location>
</feature>
<feature type="glycosylation site" description="N-linked (GlcNAc...) asparagine" evidence="4">
    <location>
        <position position="152"/>
    </location>
</feature>
<feature type="glycosylation site" description="N-linked (GlcNAc...) asparagine" evidence="4">
    <location>
        <position position="166"/>
    </location>
</feature>
<feature type="glycosylation site" description="N-linked (GlcNAc...) asparagine" evidence="4">
    <location>
        <position position="324"/>
    </location>
</feature>
<feature type="glycosylation site" description="N-linked (GlcNAc...) asparagine" evidence="4">
    <location>
        <position position="515"/>
    </location>
</feature>
<feature type="glycosylation site" description="N-linked (GlcNAc...) asparagine" evidence="4">
    <location>
        <position position="683"/>
    </location>
</feature>
<feature type="glycosylation site" description="N-linked (GlcNAc...) asparagine" evidence="4">
    <location>
        <position position="701"/>
    </location>
</feature>
<feature type="glycosylation site" description="N-linked (GlcNAc...) asparagine" evidence="4">
    <location>
        <position position="720"/>
    </location>
</feature>
<feature type="glycosylation site" description="N-linked (GlcNAc...) asparagine" evidence="4">
    <location>
        <position position="766"/>
    </location>
</feature>
<feature type="glycosylation site" description="N-linked (GlcNAc...) asparagine" evidence="4">
    <location>
        <position position="948"/>
    </location>
</feature>
<feature type="glycosylation site" description="N-linked (GlcNAc...) asparagine" evidence="4">
    <location>
        <position position="1197"/>
    </location>
</feature>
<feature type="disulfide bond" evidence="5">
    <location>
        <begin position="163"/>
        <end position="171"/>
    </location>
</feature>
<feature type="disulfide bond" evidence="5">
    <location>
        <begin position="365"/>
        <end position="383"/>
    </location>
</feature>
<feature type="disulfide bond" evidence="5">
    <location>
        <begin position="551"/>
        <end position="563"/>
    </location>
</feature>
<feature type="disulfide bond" evidence="5">
    <location>
        <begin position="763"/>
        <end position="769"/>
    </location>
</feature>
<feature type="disulfide bond" evidence="5">
    <location>
        <begin position="963"/>
        <end position="981"/>
    </location>
</feature>
<feature type="disulfide bond" evidence="5">
    <location>
        <begin position="1149"/>
        <end position="1161"/>
    </location>
</feature>
<feature type="splice variant" id="VSP_037642" description="In isoform Testis-specific." evidence="13">
    <location>
        <begin position="1"/>
        <end position="581"/>
    </location>
</feature>
<feature type="splice variant" id="VSP_037643" description="In isoform Testis-specific." evidence="13">
    <original>GCSRPWQEVLKDLVGSDALDASALMEYFQPVSQWLQEQNQRNGEVLGWPEYQWRPPLPDNYPEGI</original>
    <variation>MGQGWATPGLPRFLFLLLCCGHLLPVLSQVAADHVTANQGITNQATTRSQTTHQSTISQTIQTSNGTPGRGQGHEGARSQGPAGGNSNKTTPCGKEGEACLFSSSPPT</variation>
    <location>
        <begin position="582"/>
        <end position="646"/>
    </location>
</feature>
<feature type="sequence variant" evidence="11 12">
    <original>R</original>
    <variation>K</variation>
    <location>
        <position position="207"/>
    </location>
</feature>
<feature type="sequence conflict" description="In Ref. 2; AAG35596." evidence="15" ref="2">
    <original>L</original>
    <variation>F</variation>
    <location>
        <position position="341"/>
    </location>
</feature>
<protein>
    <recommendedName>
        <fullName evidence="14">Angiotensin-converting enzyme</fullName>
        <shortName evidence="14">ACE</shortName>
        <ecNumber evidence="2">3.4.15.1</ecNumber>
    </recommendedName>
    <alternativeName>
        <fullName>Dipeptidyl carboxypeptidase I</fullName>
    </alternativeName>
    <alternativeName>
        <fullName evidence="2">Kininase II</fullName>
    </alternativeName>
    <cdAntigenName>CD143</cdAntigenName>
    <component>
        <recommendedName>
            <fullName evidence="2">Angiotensin-converting enzyme, soluble form</fullName>
        </recommendedName>
    </component>
</protein>
<dbReference type="EC" id="3.4.15.1" evidence="2"/>
<dbReference type="EMBL" id="U03708">
    <property type="protein sequence ID" value="AAA82110.1"/>
    <property type="molecule type" value="mRNA"/>
</dbReference>
<dbReference type="EMBL" id="U03734">
    <property type="protein sequence ID" value="AAA82111.1"/>
    <property type="molecule type" value="mRNA"/>
</dbReference>
<dbReference type="EMBL" id="AF201331">
    <property type="protein sequence ID" value="AAG35596.1"/>
    <property type="molecule type" value="mRNA"/>
</dbReference>
<dbReference type="EMBL" id="AF201332">
    <property type="protein sequence ID" value="AAG35597.1"/>
    <property type="molecule type" value="mRNA"/>
</dbReference>
<dbReference type="EMBL" id="AF539425">
    <property type="protein sequence ID" value="AAN17280.1"/>
    <property type="molecule type" value="mRNA"/>
</dbReference>
<dbReference type="EMBL" id="BC085760">
    <property type="protein sequence ID" value="AAH85760.1"/>
    <property type="molecule type" value="mRNA"/>
</dbReference>
<dbReference type="EMBL" id="AF532783">
    <property type="protein sequence ID" value="AAP80808.1"/>
    <property type="molecule type" value="mRNA"/>
</dbReference>
<dbReference type="EMBL" id="AF532784">
    <property type="protein sequence ID" value="AAP80809.1"/>
    <property type="molecule type" value="mRNA"/>
</dbReference>
<dbReference type="PIR" id="JC2038">
    <property type="entry name" value="JC2038"/>
</dbReference>
<dbReference type="RefSeq" id="NP_036676.1">
    <property type="nucleotide sequence ID" value="NM_012544.1"/>
</dbReference>
<dbReference type="SMR" id="P47820"/>
<dbReference type="FunCoup" id="P47820">
    <property type="interactions" value="273"/>
</dbReference>
<dbReference type="STRING" id="10116.ENSRNOP00000010627"/>
<dbReference type="BindingDB" id="P47820"/>
<dbReference type="ChEMBL" id="CHEMBL2625"/>
<dbReference type="DrugCentral" id="P47820"/>
<dbReference type="GuidetoPHARMACOLOGY" id="1613"/>
<dbReference type="MEROPS" id="M02.001"/>
<dbReference type="MEROPS" id="M02.004"/>
<dbReference type="GlyCosmos" id="P47820">
    <property type="glycosylation" value="14 sites, 5 glycans"/>
</dbReference>
<dbReference type="GlyGen" id="P47820">
    <property type="glycosylation" value="14 sites, 5 N-linked glycans (1 site)"/>
</dbReference>
<dbReference type="iPTMnet" id="P47820"/>
<dbReference type="PhosphoSitePlus" id="P47820"/>
<dbReference type="jPOST" id="P47820"/>
<dbReference type="PaxDb" id="10116-ENSRNOP00000010627"/>
<dbReference type="ABCD" id="P47820">
    <property type="antibodies" value="1 sequenced antibody"/>
</dbReference>
<dbReference type="Ensembl" id="ENSRNOT00000010627.9">
    <molecule id="P47820-1"/>
    <property type="protein sequence ID" value="ENSRNOP00000010627.6"/>
    <property type="gene ID" value="ENSRNOG00000062101.2"/>
</dbReference>
<dbReference type="GeneID" id="24310"/>
<dbReference type="KEGG" id="rno:24310"/>
<dbReference type="UCSC" id="RGD:2493">
    <molecule id="P47820-1"/>
    <property type="organism name" value="rat"/>
</dbReference>
<dbReference type="AGR" id="RGD:2493"/>
<dbReference type="CTD" id="1636"/>
<dbReference type="RGD" id="2493">
    <property type="gene designation" value="Ace"/>
</dbReference>
<dbReference type="eggNOG" id="KOG3690">
    <property type="taxonomic scope" value="Eukaryota"/>
</dbReference>
<dbReference type="GeneTree" id="ENSGT00940000162051"/>
<dbReference type="InParanoid" id="P47820"/>
<dbReference type="OMA" id="GMPPEFW"/>
<dbReference type="OrthoDB" id="10029630at2759"/>
<dbReference type="PhylomeDB" id="P47820"/>
<dbReference type="TreeFam" id="TF312861"/>
<dbReference type="BRENDA" id="3.4.15.1">
    <property type="organism ID" value="5301"/>
</dbReference>
<dbReference type="Reactome" id="R-RNO-2022377">
    <property type="pathway name" value="Metabolism of Angiotensinogen to Angiotensins"/>
</dbReference>
<dbReference type="PRO" id="PR:P47820"/>
<dbReference type="Proteomes" id="UP000002494">
    <property type="component" value="Chromosome 10"/>
</dbReference>
<dbReference type="GO" id="GO:0009925">
    <property type="term" value="C:basal plasma membrane"/>
    <property type="evidence" value="ECO:0000314"/>
    <property type="project" value="RGD"/>
</dbReference>
<dbReference type="GO" id="GO:0031526">
    <property type="term" value="C:brush border membrane"/>
    <property type="evidence" value="ECO:0000314"/>
    <property type="project" value="RGD"/>
</dbReference>
<dbReference type="GO" id="GO:0005737">
    <property type="term" value="C:cytoplasm"/>
    <property type="evidence" value="ECO:0000266"/>
    <property type="project" value="RGD"/>
</dbReference>
<dbReference type="GO" id="GO:0005768">
    <property type="term" value="C:endosome"/>
    <property type="evidence" value="ECO:0000266"/>
    <property type="project" value="RGD"/>
</dbReference>
<dbReference type="GO" id="GO:0009897">
    <property type="term" value="C:external side of plasma membrane"/>
    <property type="evidence" value="ECO:0000266"/>
    <property type="project" value="RGD"/>
</dbReference>
<dbReference type="GO" id="GO:0070062">
    <property type="term" value="C:extracellular exosome"/>
    <property type="evidence" value="ECO:0000266"/>
    <property type="project" value="RGD"/>
</dbReference>
<dbReference type="GO" id="GO:0005576">
    <property type="term" value="C:extracellular region"/>
    <property type="evidence" value="ECO:0000266"/>
    <property type="project" value="RGD"/>
</dbReference>
<dbReference type="GO" id="GO:0005615">
    <property type="term" value="C:extracellular space"/>
    <property type="evidence" value="ECO:0000314"/>
    <property type="project" value="RGD"/>
</dbReference>
<dbReference type="GO" id="GO:0005764">
    <property type="term" value="C:lysosome"/>
    <property type="evidence" value="ECO:0000266"/>
    <property type="project" value="RGD"/>
</dbReference>
<dbReference type="GO" id="GO:0005886">
    <property type="term" value="C:plasma membrane"/>
    <property type="evidence" value="ECO:0000250"/>
    <property type="project" value="UniProtKB"/>
</dbReference>
<dbReference type="GO" id="GO:0097225">
    <property type="term" value="C:sperm midpiece"/>
    <property type="evidence" value="ECO:0000314"/>
    <property type="project" value="RGD"/>
</dbReference>
<dbReference type="GO" id="GO:0031982">
    <property type="term" value="C:vesicle"/>
    <property type="evidence" value="ECO:0000314"/>
    <property type="project" value="RGD"/>
</dbReference>
<dbReference type="GO" id="GO:0031711">
    <property type="term" value="F:bradykinin receptor binding"/>
    <property type="evidence" value="ECO:0000266"/>
    <property type="project" value="RGD"/>
</dbReference>
<dbReference type="GO" id="GO:0005516">
    <property type="term" value="F:calmodulin binding"/>
    <property type="evidence" value="ECO:0007669"/>
    <property type="project" value="UniProtKB-KW"/>
</dbReference>
<dbReference type="GO" id="GO:0031404">
    <property type="term" value="F:chloride ion binding"/>
    <property type="evidence" value="ECO:0000250"/>
    <property type="project" value="UniProtKB"/>
</dbReference>
<dbReference type="GO" id="GO:0004175">
    <property type="term" value="F:endopeptidase activity"/>
    <property type="evidence" value="ECO:0000266"/>
    <property type="project" value="RGD"/>
</dbReference>
<dbReference type="GO" id="GO:0008238">
    <property type="term" value="F:exopeptidase activity"/>
    <property type="evidence" value="ECO:0000266"/>
    <property type="project" value="RGD"/>
</dbReference>
<dbReference type="GO" id="GO:1901363">
    <property type="term" value="F:heterocyclic compound binding"/>
    <property type="evidence" value="ECO:0000314"/>
    <property type="project" value="RGD"/>
</dbReference>
<dbReference type="GO" id="GO:0004181">
    <property type="term" value="F:metallocarboxypeptidase activity"/>
    <property type="evidence" value="ECO:0000266"/>
    <property type="project" value="RGD"/>
</dbReference>
<dbReference type="GO" id="GO:0070573">
    <property type="term" value="F:metallodipeptidase activity"/>
    <property type="evidence" value="ECO:0000250"/>
    <property type="project" value="UniProtKB"/>
</dbReference>
<dbReference type="GO" id="GO:0004222">
    <property type="term" value="F:metalloendopeptidase activity"/>
    <property type="evidence" value="ECO:0000250"/>
    <property type="project" value="UniProtKB"/>
</dbReference>
<dbReference type="GO" id="GO:0008237">
    <property type="term" value="F:metallopeptidase activity"/>
    <property type="evidence" value="ECO:0000315"/>
    <property type="project" value="RGD"/>
</dbReference>
<dbReference type="GO" id="GO:0051019">
    <property type="term" value="F:mitogen-activated protein kinase binding"/>
    <property type="evidence" value="ECO:0000266"/>
    <property type="project" value="RGD"/>
</dbReference>
<dbReference type="GO" id="GO:0031434">
    <property type="term" value="F:mitogen-activated protein kinase kinase binding"/>
    <property type="evidence" value="ECO:0000266"/>
    <property type="project" value="RGD"/>
</dbReference>
<dbReference type="GO" id="GO:0008233">
    <property type="term" value="F:peptidase activity"/>
    <property type="evidence" value="ECO:0000314"/>
    <property type="project" value="UniProtKB"/>
</dbReference>
<dbReference type="GO" id="GO:0008241">
    <property type="term" value="F:peptidyl-dipeptidase activity"/>
    <property type="evidence" value="ECO:0000314"/>
    <property type="project" value="UniProtKB"/>
</dbReference>
<dbReference type="GO" id="GO:0008240">
    <property type="term" value="F:tripeptidyl-peptidase activity"/>
    <property type="evidence" value="ECO:0000266"/>
    <property type="project" value="RGD"/>
</dbReference>
<dbReference type="GO" id="GO:0008270">
    <property type="term" value="F:zinc ion binding"/>
    <property type="evidence" value="ECO:0000266"/>
    <property type="project" value="RGD"/>
</dbReference>
<dbReference type="GO" id="GO:0050435">
    <property type="term" value="P:amyloid-beta metabolic process"/>
    <property type="evidence" value="ECO:0000266"/>
    <property type="project" value="RGD"/>
</dbReference>
<dbReference type="GO" id="GO:0060978">
    <property type="term" value="P:angiogenesis involved in coronary vascular morphogenesis"/>
    <property type="evidence" value="ECO:0000315"/>
    <property type="project" value="RGD"/>
</dbReference>
<dbReference type="GO" id="GO:0002003">
    <property type="term" value="P:angiotensin maturation"/>
    <property type="evidence" value="ECO:0000250"/>
    <property type="project" value="UniProtKB"/>
</dbReference>
<dbReference type="GO" id="GO:0038166">
    <property type="term" value="P:angiotensin-activated signaling pathway"/>
    <property type="evidence" value="ECO:0000266"/>
    <property type="project" value="RGD"/>
</dbReference>
<dbReference type="GO" id="GO:0031100">
    <property type="term" value="P:animal organ regeneration"/>
    <property type="evidence" value="ECO:0000315"/>
    <property type="project" value="RGD"/>
</dbReference>
<dbReference type="GO" id="GO:0050482">
    <property type="term" value="P:arachidonate secretion"/>
    <property type="evidence" value="ECO:0000266"/>
    <property type="project" value="RGD"/>
</dbReference>
<dbReference type="GO" id="GO:0010815">
    <property type="term" value="P:bradykinin catabolic process"/>
    <property type="evidence" value="ECO:0000314"/>
    <property type="project" value="RGD"/>
</dbReference>
<dbReference type="GO" id="GO:0071838">
    <property type="term" value="P:cell proliferation in bone marrow"/>
    <property type="evidence" value="ECO:0000266"/>
    <property type="project" value="RGD"/>
</dbReference>
<dbReference type="GO" id="GO:1904045">
    <property type="term" value="P:cellular response to aldosterone"/>
    <property type="evidence" value="ECO:0000270"/>
    <property type="project" value="RGD"/>
</dbReference>
<dbReference type="GO" id="GO:0071333">
    <property type="term" value="P:cellular response to glucose stimulus"/>
    <property type="evidence" value="ECO:0000270"/>
    <property type="project" value="RGD"/>
</dbReference>
<dbReference type="GO" id="GO:0042755">
    <property type="term" value="P:eating behavior"/>
    <property type="evidence" value="ECO:0000315"/>
    <property type="project" value="RGD"/>
</dbReference>
<dbReference type="GO" id="GO:0009792">
    <property type="term" value="P:embryo development ending in birth or egg hatching"/>
    <property type="evidence" value="ECO:0000315"/>
    <property type="project" value="RGD"/>
</dbReference>
<dbReference type="GO" id="GO:0007565">
    <property type="term" value="P:female pregnancy"/>
    <property type="evidence" value="ECO:0000270"/>
    <property type="project" value="RGD"/>
</dbReference>
<dbReference type="GO" id="GO:0060047">
    <property type="term" value="P:heart contraction"/>
    <property type="evidence" value="ECO:0000266"/>
    <property type="project" value="RGD"/>
</dbReference>
<dbReference type="GO" id="GO:0042447">
    <property type="term" value="P:hormone catabolic process"/>
    <property type="evidence" value="ECO:0000250"/>
    <property type="project" value="UniProtKB"/>
</dbReference>
<dbReference type="GO" id="GO:0042445">
    <property type="term" value="P:hormone metabolic process"/>
    <property type="evidence" value="ECO:0000250"/>
    <property type="project" value="UniProtKB"/>
</dbReference>
<dbReference type="GO" id="GO:0001822">
    <property type="term" value="P:kidney development"/>
    <property type="evidence" value="ECO:0000270"/>
    <property type="project" value="RGD"/>
</dbReference>
<dbReference type="GO" id="GO:0048286">
    <property type="term" value="P:lung alveolus development"/>
    <property type="evidence" value="ECO:0000315"/>
    <property type="project" value="RGD"/>
</dbReference>
<dbReference type="GO" id="GO:0030324">
    <property type="term" value="P:lung development"/>
    <property type="evidence" value="ECO:0000270"/>
    <property type="project" value="RGD"/>
</dbReference>
<dbReference type="GO" id="GO:0008584">
    <property type="term" value="P:male gonad development"/>
    <property type="evidence" value="ECO:0000270"/>
    <property type="project" value="RGD"/>
</dbReference>
<dbReference type="GO" id="GO:0090281">
    <property type="term" value="P:negative regulation of calcium ion import"/>
    <property type="evidence" value="ECO:0000315"/>
    <property type="project" value="RGD"/>
</dbReference>
<dbReference type="GO" id="GO:0046325">
    <property type="term" value="P:negative regulation of D-glucose import"/>
    <property type="evidence" value="ECO:0000315"/>
    <property type="project" value="RGD"/>
</dbReference>
<dbReference type="GO" id="GO:1903597">
    <property type="term" value="P:negative regulation of gap junction assembly"/>
    <property type="evidence" value="ECO:0000266"/>
    <property type="project" value="RGD"/>
</dbReference>
<dbReference type="GO" id="GO:0010629">
    <property type="term" value="P:negative regulation of gene expression"/>
    <property type="evidence" value="ECO:0000266"/>
    <property type="project" value="RGD"/>
</dbReference>
<dbReference type="GO" id="GO:0002446">
    <property type="term" value="P:neutrophil mediated immunity"/>
    <property type="evidence" value="ECO:0000266"/>
    <property type="project" value="RGD"/>
</dbReference>
<dbReference type="GO" id="GO:0043171">
    <property type="term" value="P:peptide catabolic process"/>
    <property type="evidence" value="ECO:0000314"/>
    <property type="project" value="RGD"/>
</dbReference>
<dbReference type="GO" id="GO:0006518">
    <property type="term" value="P:peptide metabolic process"/>
    <property type="evidence" value="ECO:0000315"/>
    <property type="project" value="RGD"/>
</dbReference>
<dbReference type="GO" id="GO:0043065">
    <property type="term" value="P:positive regulation of apoptotic process"/>
    <property type="evidence" value="ECO:0000315"/>
    <property type="project" value="RGD"/>
</dbReference>
<dbReference type="GO" id="GO:0045777">
    <property type="term" value="P:positive regulation of blood pressure"/>
    <property type="evidence" value="ECO:0000315"/>
    <property type="project" value="RGD"/>
</dbReference>
<dbReference type="GO" id="GO:0050769">
    <property type="term" value="P:positive regulation of neurogenesis"/>
    <property type="evidence" value="ECO:0000315"/>
    <property type="project" value="RGD"/>
</dbReference>
<dbReference type="GO" id="GO:0003084">
    <property type="term" value="P:positive regulation of systemic arterial blood pressure"/>
    <property type="evidence" value="ECO:0000315"/>
    <property type="project" value="RGD"/>
</dbReference>
<dbReference type="GO" id="GO:0045907">
    <property type="term" value="P:positive regulation of vasoconstriction"/>
    <property type="evidence" value="ECO:0000315"/>
    <property type="project" value="RGD"/>
</dbReference>
<dbReference type="GO" id="GO:0010608">
    <property type="term" value="P:post-transcriptional regulation of gene expression"/>
    <property type="evidence" value="ECO:0000266"/>
    <property type="project" value="RGD"/>
</dbReference>
<dbReference type="GO" id="GO:0060177">
    <property type="term" value="P:regulation of angiotensin metabolic process"/>
    <property type="evidence" value="ECO:0000266"/>
    <property type="project" value="RGD"/>
</dbReference>
<dbReference type="GO" id="GO:0008217">
    <property type="term" value="P:regulation of blood pressure"/>
    <property type="evidence" value="ECO:0000314"/>
    <property type="project" value="BHF-UCL"/>
</dbReference>
<dbReference type="GO" id="GO:0086091">
    <property type="term" value="P:regulation of heart rate by cardiac conduction"/>
    <property type="evidence" value="ECO:0000266"/>
    <property type="project" value="RGD"/>
</dbReference>
<dbReference type="GO" id="GO:1902033">
    <property type="term" value="P:regulation of hematopoietic stem cell proliferation"/>
    <property type="evidence" value="ECO:0000266"/>
    <property type="project" value="RGD"/>
</dbReference>
<dbReference type="GO" id="GO:0014910">
    <property type="term" value="P:regulation of smooth muscle cell migration"/>
    <property type="evidence" value="ECO:0000314"/>
    <property type="project" value="BHF-UCL"/>
</dbReference>
<dbReference type="GO" id="GO:0048167">
    <property type="term" value="P:regulation of synaptic plasticity"/>
    <property type="evidence" value="ECO:0000250"/>
    <property type="project" value="UniProtKB"/>
</dbReference>
<dbReference type="GO" id="GO:0003081">
    <property type="term" value="P:regulation of systemic arterial blood pressure by renin-angiotensin"/>
    <property type="evidence" value="ECO:0000266"/>
    <property type="project" value="RGD"/>
</dbReference>
<dbReference type="GO" id="GO:0071548">
    <property type="term" value="P:response to dexamethasone"/>
    <property type="evidence" value="ECO:0000270"/>
    <property type="project" value="RGD"/>
</dbReference>
<dbReference type="GO" id="GO:0001666">
    <property type="term" value="P:response to hypoxia"/>
    <property type="evidence" value="ECO:0000270"/>
    <property type="project" value="RGD"/>
</dbReference>
<dbReference type="GO" id="GO:0034616">
    <property type="term" value="P:response to laminar fluid shear stress"/>
    <property type="evidence" value="ECO:0000270"/>
    <property type="project" value="RGD"/>
</dbReference>
<dbReference type="GO" id="GO:0032496">
    <property type="term" value="P:response to lipopolysaccharide"/>
    <property type="evidence" value="ECO:0000315"/>
    <property type="project" value="RGD"/>
</dbReference>
<dbReference type="GO" id="GO:0031667">
    <property type="term" value="P:response to nutrient levels"/>
    <property type="evidence" value="ECO:0000270"/>
    <property type="project" value="RGD"/>
</dbReference>
<dbReference type="GO" id="GO:0097066">
    <property type="term" value="P:response to thyroid hormone"/>
    <property type="evidence" value="ECO:0000270"/>
    <property type="project" value="RGD"/>
</dbReference>
<dbReference type="GO" id="GO:0009410">
    <property type="term" value="P:response to xenobiotic stimulus"/>
    <property type="evidence" value="ECO:0000270"/>
    <property type="project" value="RGD"/>
</dbReference>
<dbReference type="GO" id="GO:0007283">
    <property type="term" value="P:spermatogenesis"/>
    <property type="evidence" value="ECO:0000266"/>
    <property type="project" value="RGD"/>
</dbReference>
<dbReference type="GO" id="GO:0010814">
    <property type="term" value="P:substance P catabolic process"/>
    <property type="evidence" value="ECO:0000250"/>
    <property type="project" value="UniProtKB"/>
</dbReference>
<dbReference type="GO" id="GO:0042310">
    <property type="term" value="P:vasoconstriction"/>
    <property type="evidence" value="ECO:0000315"/>
    <property type="project" value="RGD"/>
</dbReference>
<dbReference type="CDD" id="cd06461">
    <property type="entry name" value="M2_ACE"/>
    <property type="match status" value="2"/>
</dbReference>
<dbReference type="FunFam" id="1.10.1370.30:FF:000004">
    <property type="entry name" value="Angiotensin-converting enzyme"/>
    <property type="match status" value="2"/>
</dbReference>
<dbReference type="Gene3D" id="1.10.1370.30">
    <property type="match status" value="1"/>
</dbReference>
<dbReference type="InterPro" id="IPR001548">
    <property type="entry name" value="Peptidase_M2"/>
</dbReference>
<dbReference type="PANTHER" id="PTHR10514">
    <property type="entry name" value="ANGIOTENSIN-CONVERTING ENZYME"/>
    <property type="match status" value="1"/>
</dbReference>
<dbReference type="PANTHER" id="PTHR10514:SF27">
    <property type="entry name" value="ANGIOTENSIN-CONVERTING ENZYME"/>
    <property type="match status" value="1"/>
</dbReference>
<dbReference type="Pfam" id="PF01401">
    <property type="entry name" value="Peptidase_M2"/>
    <property type="match status" value="2"/>
</dbReference>
<dbReference type="PRINTS" id="PR00791">
    <property type="entry name" value="PEPDIPTASEA"/>
</dbReference>
<dbReference type="SUPFAM" id="SSF55486">
    <property type="entry name" value="Metalloproteases ('zincins'), catalytic domain"/>
    <property type="match status" value="2"/>
</dbReference>
<dbReference type="PROSITE" id="PS52011">
    <property type="entry name" value="PEPTIDASE_M2"/>
    <property type="match status" value="2"/>
</dbReference>
<dbReference type="PROSITE" id="PS00142">
    <property type="entry name" value="ZINC_PROTEASE"/>
    <property type="match status" value="2"/>
</dbReference>
<gene>
    <name evidence="14" type="primary">Ace</name>
    <name type="synonym">Dcp1</name>
</gene>
<sequence>MGAASGQRGRWPLSPPLLMLSLLLLLLLPPSPAPALDPGLQPGNFSADEAGAQLFADSYNSSAEVVMFQSTAASWAHDTNITEENARLQEEAALINQEFAEVWGKKAKELYESIWQNFTDQKLRRIIGSVQTLGPANLPLTQRLQYNSLLSNMSRIYSTGKVCFPNKTATCWSLDPELTNILASSRNYAKVLFAWEGWHDAVGIPLRPLYQDFTALSNEAYRQDGFSDTGAYWRSWYESPSFEESLEHLYHQVEPLYLNLHAFVRRALHRRYGDKYINLRGPIPAHLLGDMWAQSWENIYDMVVPFPDKPNLDVTSTMVQKGWNATHMFRVAEEFFTSLGLSPMPPEFWAESMLEKPADGREVVCHASAWDFYNRKDFRIKQCTRVTMDQLSTVHHEMGHVQYYLQYKDLHVSLRRGANPGFHEAIGDVLALSVSTPAHLHKIGLLDRVANDIESDINYLLKMALEKIAFLPFGYLVDQWRWGVFSGRTPPSRYNYDWWYLRTKYQGICPPVARNETHFDAGAKFHIPSVTPYIRYFVSFVLQFQFHQALCKEAGHQGPLHQCDIYQSTKAGAKLQQVLQAGCSRPWQEVLKDLVGSDALDASALMEYFQPVSQWLQEQNQRNGEVLGWPEYQWRPPLPDNYPEGIDLETDEAKANRFVEEYDRTAKVLWNEYAEANWHYNTNITIEGSKILLQKNKEVSNHTLKYGTWAKTFDVSNFQNSTIKRIIKKVQNVDRAVLPPNELEEYNQILLDMETTYSVANVCYTNGTCLSLEPDLTNIMATSRKYEELLWVWKSWRDKVGRAILPFFPKYVDFSNKIAKLNGYSDAGDSWRSSYESDDLEQDLEKLYQELQPLYLNLHAYVRRSLHRHYGSEYINLDGPIPAHLLGNMWAQTWSNIYDLVAPFPSAPSIDATEAMIKQGWTPRRIFKEADNFFTSLGLLPVPPEFWNKSMLEKPTDGREVVCHASAWDFYNGKDFRIKQCTSVNMEELVIAHHEMGHIQYFMQYKDLPVTFREGANPGFHEAIGDVLALSVSTPKHLHSLNLLSSEGSGYEHDINFLMKMALDKIAFIPFSYLIDQWRWRVFDGSITKENYNQEWWSLRLKYQGLCPPVPRSQGDFDPGSKFHVPANVPYIRYFISFIIQFQFHEALCRAAGHTGPLYKCDIYQSKEAGKLLADAMKLGYSKQWPEAMKIITGQPNMSASAIMNYFKPLTEWLVTENRRHGETLGWPEYTWTPNTARAEGSLPESSRVNFLGMYLEPQQARVGQWVLLFLGVALLVATVGLAHRLYNIHNHHSLRRPHRGPQFGSEVELRHS</sequence>
<reference key="1">
    <citation type="journal article" date="1994" name="Biochem. Biophys. Res. Commun.">
        <title>Angiotensin converting enzyme and genetic hypertension: cloning of rat cDNAs and characterization of the enzyme.</title>
        <authorList>
            <person name="Koike G."/>
            <person name="Krieger J.E."/>
            <person name="Jacob H.J."/>
            <person name="Mukoyama M."/>
            <person name="Pratt R.E."/>
            <person name="Dzau V.J."/>
        </authorList>
    </citation>
    <scope>NUCLEOTIDE SEQUENCE [MRNA] (ISOFORM SOMATIC)</scope>
    <scope>VARIANT LYS-207</scope>
    <source>
        <tissue>Lung</tissue>
    </source>
</reference>
<reference key="2">
    <citation type="submission" date="1999-11" db="EMBL/GenBank/DDBJ databases">
        <title>Characterization of a missense mutation in the angiotensin I-converting enzyme cDNA in exudative inflammation resistant F344/N rats.</title>
        <authorList>
            <person name="Jafarian-Tehrani M."/>
            <person name="Listwak S."/>
            <person name="Barrientos R.M."/>
            <person name="Michaud A."/>
            <person name="Corvol P."/>
            <person name="Sternberg E.M."/>
        </authorList>
    </citation>
    <scope>NUCLEOTIDE SEQUENCE [MRNA] (ISOFORM SOMATIC)</scope>
    <source>
        <strain>Fischer 344/N</strain>
        <strain>Lewis/N</strain>
        <tissue>Lung</tissue>
    </source>
</reference>
<reference key="3">
    <citation type="journal article" date="2003" name="Biochem. Pharmacol.">
        <title>Species-specific splicing and expression of angiotensin converting enzyme.</title>
        <authorList>
            <person name="Tian X.-L."/>
            <person name="Paul M."/>
        </authorList>
    </citation>
    <scope>NUCLEOTIDE SEQUENCE [MRNA] (ISOFORM TESTIS-SPECIFIC)</scope>
    <scope>TISSUE SPECIFICITY</scope>
    <source>
        <strain>Sprague-Dawley</strain>
        <tissue>Testis</tissue>
    </source>
</reference>
<reference key="4">
    <citation type="journal article" date="2004" name="Genome Res.">
        <title>The status, quality, and expansion of the NIH full-length cDNA project: the Mammalian Gene Collection (MGC).</title>
        <authorList>
            <consortium name="The MGC Project Team"/>
        </authorList>
    </citation>
    <scope>NUCLEOTIDE SEQUENCE [LARGE SCALE MRNA] (ISOFORM SOMATIC)</scope>
    <source>
        <tissue>Lung</tissue>
    </source>
</reference>
<reference key="5">
    <citation type="submission" date="2002-07" db="EMBL/GenBank/DDBJ databases">
        <title>Analysis of the angiotensin converting enzyme (Ace) cDNA sequence and mRNA level of expression in WAG and ISIAH rats.</title>
        <authorList>
            <person name="Tsetsarkin K.A."/>
            <person name="Dymshits G.M."/>
            <person name="Markel A.L."/>
            <person name="Redina O.E."/>
        </authorList>
    </citation>
    <scope>NUCLEOTIDE SEQUENCE [MRNA] OF 12-1313 (ISOFORM SOMATIC)</scope>
    <scope>VARIANT LYS-207</scope>
    <source>
        <tissue>Kidney</tissue>
    </source>
</reference>
<reference key="6">
    <citation type="journal article" date="1982" name="Neurochem. Int.">
        <title>Separate metabolic pathways for Leu-enkephalin and Met-enkephalin-Arg(6)-Phe(7) degradation by rat striatal synaptosomal membranes.</title>
        <authorList>
            <person name="Benuck M."/>
            <person name="Berg M.J."/>
            <person name="Marks N."/>
        </authorList>
    </citation>
    <scope>FUNCTION</scope>
    <scope>CATALYTIC ACTIVITY</scope>
</reference>
<reference key="7">
    <citation type="journal article" date="2003" name="J. Biol. Chem.">
        <title>Novel natural peptide substrates for endopeptidase 24.15, neurolysin, and angiotensin-converting enzyme.</title>
        <authorList>
            <person name="Rioli V."/>
            <person name="Gozzo F.C."/>
            <person name="Heimann A.S."/>
            <person name="Linardi A."/>
            <person name="Krieger J.E."/>
            <person name="Shida C.S."/>
            <person name="Almeida P.C."/>
            <person name="Hyslop S."/>
            <person name="Eberlin M.N."/>
            <person name="Ferro E.S."/>
        </authorList>
    </citation>
    <scope>FUNCTION</scope>
</reference>
<reference key="8">
    <citation type="journal article" date="2005" name="Eur. Heart J.">
        <title>Myocardial infarction increases ACE2 expression in rat and humans.</title>
        <authorList>
            <person name="Burrell L.M."/>
            <person name="Risvanis J."/>
            <person name="Kubota E."/>
            <person name="Dean R.G."/>
            <person name="MacDonald P.S."/>
            <person name="Lu S."/>
            <person name="Tikellis C."/>
            <person name="Grant S.L."/>
            <person name="Lew R.A."/>
            <person name="Smith A.I."/>
            <person name="Cooper M.E."/>
            <person name="Johnston C.I."/>
        </authorList>
    </citation>
    <scope>INDUCTION</scope>
</reference>
<reference key="9">
    <citation type="journal article" date="2007" name="Proc. Natl. Acad. Sci. U.S.A.">
        <title>Hemopressin is an inverse agonist of CB1 cannabinoid receptors.</title>
        <authorList>
            <person name="Heimann A.S."/>
            <person name="Gomes I."/>
            <person name="Dale C.S."/>
            <person name="Pagano R.L."/>
            <person name="Gupta A."/>
            <person name="de Souza L.L."/>
            <person name="Luchessi A.D."/>
            <person name="Castro L.M."/>
            <person name="Giorgi R."/>
            <person name="Rioli V."/>
            <person name="Ferro E.S."/>
            <person name="Devi L.A."/>
        </authorList>
    </citation>
    <scope>FUNCTION</scope>
</reference>
<reference key="10">
    <citation type="journal article" date="2012" name="Nat. Commun.">
        <title>Quantitative maps of protein phosphorylation sites across 14 different rat organs and tissues.</title>
        <authorList>
            <person name="Lundby A."/>
            <person name="Secher A."/>
            <person name="Lage K."/>
            <person name="Nordsborg N.B."/>
            <person name="Dmytriyev A."/>
            <person name="Lundby C."/>
            <person name="Olsen J.V."/>
        </authorList>
    </citation>
    <scope>PHOSPHORYLATION [LARGE SCALE ANALYSIS] AT SER-1306</scope>
    <scope>IDENTIFICATION BY MASS SPECTROMETRY [LARGE SCALE ANALYSIS]</scope>
</reference>
<name>ACE_RAT</name>